<proteinExistence type="inferred from homology"/>
<protein>
    <recommendedName>
        <fullName evidence="1">UPF0060 membrane protein YnfA</fullName>
    </recommendedName>
</protein>
<keyword id="KW-0997">Cell inner membrane</keyword>
<keyword id="KW-1003">Cell membrane</keyword>
<keyword id="KW-0472">Membrane</keyword>
<keyword id="KW-0812">Transmembrane</keyword>
<keyword id="KW-1133">Transmembrane helix</keyword>
<reference key="1">
    <citation type="submission" date="2007-11" db="EMBL/GenBank/DDBJ databases">
        <authorList>
            <consortium name="The Salmonella enterica serovar Paratyphi B Genome Sequencing Project"/>
            <person name="McClelland M."/>
            <person name="Sanderson E.K."/>
            <person name="Porwollik S."/>
            <person name="Spieth J."/>
            <person name="Clifton W.S."/>
            <person name="Fulton R."/>
            <person name="Cordes M."/>
            <person name="Wollam A."/>
            <person name="Shah N."/>
            <person name="Pepin K."/>
            <person name="Bhonagiri V."/>
            <person name="Nash W."/>
            <person name="Johnson M."/>
            <person name="Thiruvilangam P."/>
            <person name="Wilson R."/>
        </authorList>
    </citation>
    <scope>NUCLEOTIDE SEQUENCE [LARGE SCALE GENOMIC DNA]</scope>
    <source>
        <strain>ATCC BAA-1250 / SPB7</strain>
    </source>
</reference>
<evidence type="ECO:0000255" key="1">
    <source>
        <dbReference type="HAMAP-Rule" id="MF_00010"/>
    </source>
</evidence>
<comment type="subcellular location">
    <subcellularLocation>
        <location evidence="1">Cell inner membrane</location>
        <topology evidence="1">Multi-pass membrane protein</topology>
    </subcellularLocation>
</comment>
<comment type="similarity">
    <text evidence="1">Belongs to the UPF0060 family.</text>
</comment>
<sequence length="108" mass="11948">MLKTTLLFFVTALCEIIGCFLPWLWLKRGASVWWLLPAAASLALFVWLLTLHPAASGRVYAAYGGVYVCTALLWLRVVDGVRLTVYDWCGALIALCGMLIIVVGWGRT</sequence>
<feature type="chain" id="PRO_1000073931" description="UPF0060 membrane protein YnfA">
    <location>
        <begin position="1"/>
        <end position="108"/>
    </location>
</feature>
<feature type="topological domain" description="Periplasmic" evidence="1">
    <location>
        <begin position="1"/>
        <end position="5"/>
    </location>
</feature>
<feature type="transmembrane region" description="Helical" evidence="1">
    <location>
        <begin position="6"/>
        <end position="26"/>
    </location>
</feature>
<feature type="topological domain" description="Cytoplasmic" evidence="1">
    <location>
        <begin position="27"/>
        <end position="30"/>
    </location>
</feature>
<feature type="transmembrane region" description="Helical" evidence="1">
    <location>
        <begin position="31"/>
        <end position="51"/>
    </location>
</feature>
<feature type="topological domain" description="Periplasmic" evidence="1">
    <location>
        <begin position="52"/>
        <end position="60"/>
    </location>
</feature>
<feature type="transmembrane region" description="Helical" evidence="1">
    <location>
        <begin position="61"/>
        <end position="81"/>
    </location>
</feature>
<feature type="topological domain" description="Cytoplasmic" evidence="1">
    <location>
        <begin position="82"/>
        <end position="84"/>
    </location>
</feature>
<feature type="transmembrane region" description="Helical" evidence="1">
    <location>
        <begin position="85"/>
        <end position="105"/>
    </location>
</feature>
<feature type="topological domain" description="Periplasmic" evidence="1">
    <location>
        <begin position="106"/>
        <end position="108"/>
    </location>
</feature>
<name>YNFA_SALPB</name>
<accession>A9MZW8</accession>
<organism>
    <name type="scientific">Salmonella paratyphi B (strain ATCC BAA-1250 / SPB7)</name>
    <dbReference type="NCBI Taxonomy" id="1016998"/>
    <lineage>
        <taxon>Bacteria</taxon>
        <taxon>Pseudomonadati</taxon>
        <taxon>Pseudomonadota</taxon>
        <taxon>Gammaproteobacteria</taxon>
        <taxon>Enterobacterales</taxon>
        <taxon>Enterobacteriaceae</taxon>
        <taxon>Salmonella</taxon>
    </lineage>
</organism>
<dbReference type="EMBL" id="CP000886">
    <property type="protein sequence ID" value="ABX67199.1"/>
    <property type="molecule type" value="Genomic_DNA"/>
</dbReference>
<dbReference type="RefSeq" id="WP_000921389.1">
    <property type="nucleotide sequence ID" value="NC_010102.1"/>
</dbReference>
<dbReference type="SMR" id="A9MZW8"/>
<dbReference type="KEGG" id="spq:SPAB_01806"/>
<dbReference type="PATRIC" id="fig|1016998.12.peg.1701"/>
<dbReference type="HOGENOM" id="CLU_117653_2_1_6"/>
<dbReference type="BioCyc" id="SENT1016998:SPAB_RS07320-MONOMER"/>
<dbReference type="Proteomes" id="UP000008556">
    <property type="component" value="Chromosome"/>
</dbReference>
<dbReference type="GO" id="GO:0005886">
    <property type="term" value="C:plasma membrane"/>
    <property type="evidence" value="ECO:0007669"/>
    <property type="project" value="UniProtKB-SubCell"/>
</dbReference>
<dbReference type="HAMAP" id="MF_00010">
    <property type="entry name" value="UPF0060"/>
    <property type="match status" value="1"/>
</dbReference>
<dbReference type="InterPro" id="IPR003844">
    <property type="entry name" value="UPF0060"/>
</dbReference>
<dbReference type="NCBIfam" id="NF002586">
    <property type="entry name" value="PRK02237.1"/>
    <property type="match status" value="1"/>
</dbReference>
<dbReference type="PANTHER" id="PTHR36116">
    <property type="entry name" value="UPF0060 MEMBRANE PROTEIN YNFA"/>
    <property type="match status" value="1"/>
</dbReference>
<dbReference type="PANTHER" id="PTHR36116:SF1">
    <property type="entry name" value="UPF0060 MEMBRANE PROTEIN YNFA"/>
    <property type="match status" value="1"/>
</dbReference>
<dbReference type="Pfam" id="PF02694">
    <property type="entry name" value="UPF0060"/>
    <property type="match status" value="1"/>
</dbReference>
<dbReference type="SUPFAM" id="SSF103481">
    <property type="entry name" value="Multidrug resistance efflux transporter EmrE"/>
    <property type="match status" value="1"/>
</dbReference>
<gene>
    <name evidence="1" type="primary">ynfA</name>
    <name type="ordered locus">SPAB_01806</name>
</gene>